<proteinExistence type="inferred from homology"/>
<feature type="chain" id="PRO_0000438807" description="KIN17-like protein">
    <location>
        <begin position="1"/>
        <end position="430"/>
    </location>
</feature>
<feature type="zinc finger region" description="C2H2-type" evidence="3">
    <location>
        <begin position="28"/>
        <end position="50"/>
    </location>
</feature>
<feature type="region of interest" description="Winged helix-turn-helix (wHTH)" evidence="1">
    <location>
        <begin position="51"/>
        <end position="160"/>
    </location>
</feature>
<feature type="region of interest" description="Disordered" evidence="4">
    <location>
        <begin position="179"/>
        <end position="230"/>
    </location>
</feature>
<feature type="region of interest" description="Disordered" evidence="4">
    <location>
        <begin position="261"/>
        <end position="284"/>
    </location>
</feature>
<feature type="region of interest" description="C-terminal subdomain A" evidence="1">
    <location>
        <begin position="319"/>
        <end position="370"/>
    </location>
</feature>
<feature type="region of interest" description="C-terminal subdomain B" evidence="1">
    <location>
        <begin position="376"/>
        <end position="427"/>
    </location>
</feature>
<feature type="coiled-coil region" evidence="3">
    <location>
        <begin position="147"/>
        <end position="183"/>
    </location>
</feature>
<feature type="coiled-coil region" evidence="3">
    <location>
        <begin position="283"/>
        <end position="312"/>
    </location>
</feature>
<feature type="short sequence motif" description="Nuclear localization signal (NLS)" evidence="5">
    <location>
        <begin position="155"/>
        <end position="158"/>
    </location>
</feature>
<feature type="compositionally biased region" description="Acidic residues" evidence="4">
    <location>
        <begin position="209"/>
        <end position="224"/>
    </location>
</feature>
<feature type="compositionally biased region" description="Basic and acidic residues" evidence="4">
    <location>
        <begin position="261"/>
        <end position="278"/>
    </location>
</feature>
<accession>A2XIP9</accession>
<sequence>MGKHEFLTPKAIANRIKAKGLQKLRWYCQMCQKQCRDENGFKCHCMSESHQRQMQVFGQAPDRVVEGFSEEFLDAFLTLLRRAHRHSRIAATVVYNEFIADRHHVHMNSTRWATLTEFVKFLGREGHCKVEDTPKGWFITYIDRDSEQAVKARLKRKRIKSDLAEDERQERMIARQIERAQQSMGKTNGELGDDASPDGSEGESGSADEYSDSENDHEGQEEDAKEANKAAGKIAIALQRAVPGPKVNPLDDKPKVKFGFEEEDEVSARDKEKEELAKKKGKDAINAAEARRSALDELMKEEEKAKERSNRKDYWLCPGIVVKVMSKSLAEKGYCKQKGVVKRVIDKYVGEIEMLESKHVLRVDQDELETVIPQIGGLVRIVNGAYRGSNARLLSVDTERFCAKVQVEKGLYDGKVLKAIEYEDICKIFH</sequence>
<protein>
    <recommendedName>
        <fullName evidence="5">KIN17-like protein</fullName>
    </recommendedName>
</protein>
<reference key="1">
    <citation type="journal article" date="2005" name="PLoS Biol.">
        <title>The genomes of Oryza sativa: a history of duplications.</title>
        <authorList>
            <person name="Yu J."/>
            <person name="Wang J."/>
            <person name="Lin W."/>
            <person name="Li S."/>
            <person name="Li H."/>
            <person name="Zhou J."/>
            <person name="Ni P."/>
            <person name="Dong W."/>
            <person name="Hu S."/>
            <person name="Zeng C."/>
            <person name="Zhang J."/>
            <person name="Zhang Y."/>
            <person name="Li R."/>
            <person name="Xu Z."/>
            <person name="Li S."/>
            <person name="Li X."/>
            <person name="Zheng H."/>
            <person name="Cong L."/>
            <person name="Lin L."/>
            <person name="Yin J."/>
            <person name="Geng J."/>
            <person name="Li G."/>
            <person name="Shi J."/>
            <person name="Liu J."/>
            <person name="Lv H."/>
            <person name="Li J."/>
            <person name="Wang J."/>
            <person name="Deng Y."/>
            <person name="Ran L."/>
            <person name="Shi X."/>
            <person name="Wang X."/>
            <person name="Wu Q."/>
            <person name="Li C."/>
            <person name="Ren X."/>
            <person name="Wang J."/>
            <person name="Wang X."/>
            <person name="Li D."/>
            <person name="Liu D."/>
            <person name="Zhang X."/>
            <person name="Ji Z."/>
            <person name="Zhao W."/>
            <person name="Sun Y."/>
            <person name="Zhang Z."/>
            <person name="Bao J."/>
            <person name="Han Y."/>
            <person name="Dong L."/>
            <person name="Ji J."/>
            <person name="Chen P."/>
            <person name="Wu S."/>
            <person name="Liu J."/>
            <person name="Xiao Y."/>
            <person name="Bu D."/>
            <person name="Tan J."/>
            <person name="Yang L."/>
            <person name="Ye C."/>
            <person name="Zhang J."/>
            <person name="Xu J."/>
            <person name="Zhou Y."/>
            <person name="Yu Y."/>
            <person name="Zhang B."/>
            <person name="Zhuang S."/>
            <person name="Wei H."/>
            <person name="Liu B."/>
            <person name="Lei M."/>
            <person name="Yu H."/>
            <person name="Li Y."/>
            <person name="Xu H."/>
            <person name="Wei S."/>
            <person name="He X."/>
            <person name="Fang L."/>
            <person name="Zhang Z."/>
            <person name="Zhang Y."/>
            <person name="Huang X."/>
            <person name="Su Z."/>
            <person name="Tong W."/>
            <person name="Li J."/>
            <person name="Tong Z."/>
            <person name="Li S."/>
            <person name="Ye J."/>
            <person name="Wang L."/>
            <person name="Fang L."/>
            <person name="Lei T."/>
            <person name="Chen C.-S."/>
            <person name="Chen H.-C."/>
            <person name="Xu Z."/>
            <person name="Li H."/>
            <person name="Huang H."/>
            <person name="Zhang F."/>
            <person name="Xu H."/>
            <person name="Li N."/>
            <person name="Zhao C."/>
            <person name="Li S."/>
            <person name="Dong L."/>
            <person name="Huang Y."/>
            <person name="Li L."/>
            <person name="Xi Y."/>
            <person name="Qi Q."/>
            <person name="Li W."/>
            <person name="Zhang B."/>
            <person name="Hu W."/>
            <person name="Zhang Y."/>
            <person name="Tian X."/>
            <person name="Jiao Y."/>
            <person name="Liang X."/>
            <person name="Jin J."/>
            <person name="Gao L."/>
            <person name="Zheng W."/>
            <person name="Hao B."/>
            <person name="Liu S.-M."/>
            <person name="Wang W."/>
            <person name="Yuan L."/>
            <person name="Cao M."/>
            <person name="McDermott J."/>
            <person name="Samudrala R."/>
            <person name="Wang J."/>
            <person name="Wong G.K.-S."/>
            <person name="Yang H."/>
        </authorList>
    </citation>
    <scope>NUCLEOTIDE SEQUENCE [LARGE SCALE GENOMIC DNA]</scope>
    <source>
        <strain>cv. 93-11</strain>
    </source>
</reference>
<evidence type="ECO:0000250" key="1">
    <source>
        <dbReference type="UniProtKB" id="O60870"/>
    </source>
</evidence>
<evidence type="ECO:0000250" key="2">
    <source>
        <dbReference type="UniProtKB" id="Q9ZVU5"/>
    </source>
</evidence>
<evidence type="ECO:0000255" key="3"/>
<evidence type="ECO:0000256" key="4">
    <source>
        <dbReference type="SAM" id="MobiDB-lite"/>
    </source>
</evidence>
<evidence type="ECO:0000305" key="5"/>
<evidence type="ECO:0000312" key="6">
    <source>
        <dbReference type="EMBL" id="EAY90709.1"/>
    </source>
</evidence>
<name>KIN17_ORYSI</name>
<keyword id="KW-0175">Coiled coil</keyword>
<keyword id="KW-0479">Metal-binding</keyword>
<keyword id="KW-0539">Nucleus</keyword>
<keyword id="KW-1185">Reference proteome</keyword>
<keyword id="KW-0862">Zinc</keyword>
<keyword id="KW-0863">Zinc-finger</keyword>
<gene>
    <name evidence="5" type="primary">KIN17</name>
    <name evidence="6" type="ORF">OsI_12309</name>
</gene>
<comment type="subcellular location">
    <subcellularLocation>
        <location evidence="2">Nucleus</location>
    </subcellularLocation>
</comment>
<comment type="similarity">
    <text evidence="5">Belongs to the KIN17 family.</text>
</comment>
<dbReference type="EMBL" id="CM000128">
    <property type="protein sequence ID" value="EAY90709.1"/>
    <property type="molecule type" value="Genomic_DNA"/>
</dbReference>
<dbReference type="SMR" id="A2XIP9"/>
<dbReference type="STRING" id="39946.A2XIP9"/>
<dbReference type="EnsemblPlants" id="BGIOSGA010407-TA">
    <property type="protein sequence ID" value="BGIOSGA010407-PA"/>
    <property type="gene ID" value="BGIOSGA010407"/>
</dbReference>
<dbReference type="Gramene" id="BGIOSGA010407-TA">
    <property type="protein sequence ID" value="BGIOSGA010407-PA"/>
    <property type="gene ID" value="BGIOSGA010407"/>
</dbReference>
<dbReference type="HOGENOM" id="CLU_030065_1_0_1"/>
<dbReference type="OMA" id="FCATIEL"/>
<dbReference type="Proteomes" id="UP000007015">
    <property type="component" value="Chromosome 3"/>
</dbReference>
<dbReference type="GO" id="GO:0005634">
    <property type="term" value="C:nucleus"/>
    <property type="evidence" value="ECO:0007669"/>
    <property type="project" value="UniProtKB-SubCell"/>
</dbReference>
<dbReference type="GO" id="GO:0003690">
    <property type="term" value="F:double-stranded DNA binding"/>
    <property type="evidence" value="ECO:0007669"/>
    <property type="project" value="TreeGrafter"/>
</dbReference>
<dbReference type="GO" id="GO:0008270">
    <property type="term" value="F:zinc ion binding"/>
    <property type="evidence" value="ECO:0007669"/>
    <property type="project" value="UniProtKB-KW"/>
</dbReference>
<dbReference type="GO" id="GO:0006974">
    <property type="term" value="P:DNA damage response"/>
    <property type="evidence" value="ECO:0007669"/>
    <property type="project" value="TreeGrafter"/>
</dbReference>
<dbReference type="GO" id="GO:0006260">
    <property type="term" value="P:DNA replication"/>
    <property type="evidence" value="ECO:0007669"/>
    <property type="project" value="TreeGrafter"/>
</dbReference>
<dbReference type="CDD" id="cd13155">
    <property type="entry name" value="KOW_KIN17"/>
    <property type="match status" value="1"/>
</dbReference>
<dbReference type="FunFam" id="1.10.10.2030:FF:000001">
    <property type="entry name" value="DNA/RNA-binding protein KIN17, putative"/>
    <property type="match status" value="1"/>
</dbReference>
<dbReference type="FunFam" id="2.30.30.30:FF:000021">
    <property type="entry name" value="DNA/RNA-binding protein KIN17, putative"/>
    <property type="match status" value="1"/>
</dbReference>
<dbReference type="FunFam" id="2.30.30.140:FF:000056">
    <property type="entry name" value="DNA/RNA-binding protein kin17-like"/>
    <property type="match status" value="1"/>
</dbReference>
<dbReference type="Gene3D" id="2.30.30.140">
    <property type="match status" value="1"/>
</dbReference>
<dbReference type="Gene3D" id="2.30.30.30">
    <property type="match status" value="1"/>
</dbReference>
<dbReference type="Gene3D" id="1.10.10.2030">
    <property type="entry name" value="DNA/RNA-binding protein Kin17, conserved domain"/>
    <property type="match status" value="1"/>
</dbReference>
<dbReference type="InterPro" id="IPR056767">
    <property type="entry name" value="C2H2-Znf_KIN17"/>
</dbReference>
<dbReference type="InterPro" id="IPR019447">
    <property type="entry name" value="DNA/RNA-bd_Kin17_WH-like_dom"/>
</dbReference>
<dbReference type="InterPro" id="IPR037321">
    <property type="entry name" value="KIN17-like"/>
</dbReference>
<dbReference type="InterPro" id="IPR038254">
    <property type="entry name" value="KIN17_WH-like_sf"/>
</dbReference>
<dbReference type="InterPro" id="IPR041330">
    <property type="entry name" value="KN17_SH3"/>
</dbReference>
<dbReference type="InterPro" id="IPR041995">
    <property type="entry name" value="KOW_KIN17"/>
</dbReference>
<dbReference type="InterPro" id="IPR014722">
    <property type="entry name" value="Rib_uL2_dom2"/>
</dbReference>
<dbReference type="InterPro" id="IPR036236">
    <property type="entry name" value="Znf_C2H2_sf"/>
</dbReference>
<dbReference type="PANTHER" id="PTHR12805:SF0">
    <property type="entry name" value="DNA_RNA-BINDING PROTEIN KIN17"/>
    <property type="match status" value="1"/>
</dbReference>
<dbReference type="PANTHER" id="PTHR12805">
    <property type="entry name" value="KIN17 KIN, ANTIGENIC DETERMINANT OF RECA PROTEIN HOMOLOG"/>
    <property type="match status" value="1"/>
</dbReference>
<dbReference type="Pfam" id="PF25095">
    <property type="entry name" value="C2H2-zf_KIN17"/>
    <property type="match status" value="1"/>
</dbReference>
<dbReference type="Pfam" id="PF18131">
    <property type="entry name" value="KN17_SH3"/>
    <property type="match status" value="1"/>
</dbReference>
<dbReference type="Pfam" id="PF25092">
    <property type="entry name" value="SH3_KIN17_C"/>
    <property type="match status" value="1"/>
</dbReference>
<dbReference type="Pfam" id="PF10357">
    <property type="entry name" value="WH_KIN17"/>
    <property type="match status" value="1"/>
</dbReference>
<dbReference type="SMART" id="SM01253">
    <property type="entry name" value="Kin17_mid"/>
    <property type="match status" value="1"/>
</dbReference>
<dbReference type="SUPFAM" id="SSF57667">
    <property type="entry name" value="beta-beta-alpha zinc fingers"/>
    <property type="match status" value="1"/>
</dbReference>
<dbReference type="PROSITE" id="PS00028">
    <property type="entry name" value="ZINC_FINGER_C2H2_1"/>
    <property type="match status" value="1"/>
</dbReference>
<organism>
    <name type="scientific">Oryza sativa subsp. indica</name>
    <name type="common">Rice</name>
    <dbReference type="NCBI Taxonomy" id="39946"/>
    <lineage>
        <taxon>Eukaryota</taxon>
        <taxon>Viridiplantae</taxon>
        <taxon>Streptophyta</taxon>
        <taxon>Embryophyta</taxon>
        <taxon>Tracheophyta</taxon>
        <taxon>Spermatophyta</taxon>
        <taxon>Magnoliopsida</taxon>
        <taxon>Liliopsida</taxon>
        <taxon>Poales</taxon>
        <taxon>Poaceae</taxon>
        <taxon>BOP clade</taxon>
        <taxon>Oryzoideae</taxon>
        <taxon>Oryzeae</taxon>
        <taxon>Oryzinae</taxon>
        <taxon>Oryza</taxon>
        <taxon>Oryza sativa</taxon>
    </lineage>
</organism>